<name>FMOD_BOVIN</name>
<gene>
    <name type="primary">FMOD</name>
</gene>
<proteinExistence type="evidence at protein level"/>
<evidence type="ECO:0000250" key="1"/>
<evidence type="ECO:0000255" key="2"/>
<evidence type="ECO:0000269" key="3">
    <source>
    </source>
</evidence>
<evidence type="ECO:0000269" key="4">
    <source>
    </source>
</evidence>
<evidence type="ECO:0000305" key="5"/>
<evidence type="ECO:0000305" key="6">
    <source>
    </source>
</evidence>
<organism>
    <name type="scientific">Bos taurus</name>
    <name type="common">Bovine</name>
    <dbReference type="NCBI Taxonomy" id="9913"/>
    <lineage>
        <taxon>Eukaryota</taxon>
        <taxon>Metazoa</taxon>
        <taxon>Chordata</taxon>
        <taxon>Craniata</taxon>
        <taxon>Vertebrata</taxon>
        <taxon>Euteleostomi</taxon>
        <taxon>Mammalia</taxon>
        <taxon>Eutheria</taxon>
        <taxon>Laurasiatheria</taxon>
        <taxon>Artiodactyla</taxon>
        <taxon>Ruminantia</taxon>
        <taxon>Pecora</taxon>
        <taxon>Bovidae</taxon>
        <taxon>Bovinae</taxon>
        <taxon>Bos</taxon>
    </lineage>
</organism>
<protein>
    <recommendedName>
        <fullName>Fibromodulin</fullName>
        <shortName>FM</shortName>
    </recommendedName>
    <alternativeName>
        <fullName>Collagen-binding 59 kDa protein</fullName>
    </alternativeName>
    <alternativeName>
        <fullName>Keratan sulfate proteoglycan fibromodulin</fullName>
        <shortName>KSPG fibromodulin</shortName>
    </alternativeName>
</protein>
<dbReference type="EMBL" id="X16485">
    <property type="protein sequence ID" value="CAA34503.1"/>
    <property type="molecule type" value="mRNA"/>
</dbReference>
<dbReference type="EMBL" id="BT030742">
    <property type="protein sequence ID" value="ABS45058.1"/>
    <property type="molecule type" value="mRNA"/>
</dbReference>
<dbReference type="EMBL" id="BC104615">
    <property type="protein sequence ID" value="AAI04616.1"/>
    <property type="molecule type" value="mRNA"/>
</dbReference>
<dbReference type="PIR" id="S05390">
    <property type="entry name" value="S05390"/>
</dbReference>
<dbReference type="RefSeq" id="NP_776483.2">
    <property type="nucleotide sequence ID" value="NM_174058.3"/>
</dbReference>
<dbReference type="RefSeq" id="XP_059731202.1">
    <property type="nucleotide sequence ID" value="XM_059875219.1"/>
</dbReference>
<dbReference type="SMR" id="P13605"/>
<dbReference type="FunCoup" id="P13605">
    <property type="interactions" value="284"/>
</dbReference>
<dbReference type="IntAct" id="P13605">
    <property type="interactions" value="4"/>
</dbReference>
<dbReference type="STRING" id="9913.ENSBTAP00000019854"/>
<dbReference type="GlyCosmos" id="P13605">
    <property type="glycosylation" value="5 sites, No reported glycans"/>
</dbReference>
<dbReference type="GlyGen" id="P13605">
    <property type="glycosylation" value="5 sites"/>
</dbReference>
<dbReference type="iPTMnet" id="P13605"/>
<dbReference type="PaxDb" id="9913-ENSBTAP00000019854"/>
<dbReference type="PeptideAtlas" id="P13605"/>
<dbReference type="Ensembl" id="ENSBTAT00000019854.7">
    <property type="protein sequence ID" value="ENSBTAP00000019854.5"/>
    <property type="gene ID" value="ENSBTAG00000014912.7"/>
</dbReference>
<dbReference type="GeneID" id="281168"/>
<dbReference type="KEGG" id="bta:281168"/>
<dbReference type="CTD" id="2331"/>
<dbReference type="VEuPathDB" id="HostDB:ENSBTAG00000014912"/>
<dbReference type="VGNC" id="VGNC:29054">
    <property type="gene designation" value="FMOD"/>
</dbReference>
<dbReference type="eggNOG" id="KOG0619">
    <property type="taxonomic scope" value="Eukaryota"/>
</dbReference>
<dbReference type="GeneTree" id="ENSGT00940000157007"/>
<dbReference type="HOGENOM" id="CLU_000288_186_4_1"/>
<dbReference type="InParanoid" id="P13605"/>
<dbReference type="OMA" id="WWFQYLR"/>
<dbReference type="OrthoDB" id="1668230at2759"/>
<dbReference type="TreeFam" id="TF334562"/>
<dbReference type="Reactome" id="R-BTA-2022854">
    <property type="pathway name" value="Keratan sulfate biosynthesis"/>
</dbReference>
<dbReference type="Reactome" id="R-BTA-2022857">
    <property type="pathway name" value="Keratan sulfate degradation"/>
</dbReference>
<dbReference type="Proteomes" id="UP000009136">
    <property type="component" value="Chromosome 16"/>
</dbReference>
<dbReference type="Bgee" id="ENSBTAG00000014912">
    <property type="expression patterns" value="Expressed in trachea and 103 other cell types or tissues"/>
</dbReference>
<dbReference type="GO" id="GO:0005615">
    <property type="term" value="C:extracellular space"/>
    <property type="evidence" value="ECO:0000318"/>
    <property type="project" value="GO_Central"/>
</dbReference>
<dbReference type="GO" id="GO:0030199">
    <property type="term" value="P:collagen fibril organization"/>
    <property type="evidence" value="ECO:0007669"/>
    <property type="project" value="Ensembl"/>
</dbReference>
<dbReference type="FunFam" id="3.80.10.10:FF:000460">
    <property type="entry name" value="Fibromodulin"/>
    <property type="match status" value="1"/>
</dbReference>
<dbReference type="FunFam" id="3.80.10.10:FF:000390">
    <property type="entry name" value="fibromodulin"/>
    <property type="match status" value="1"/>
</dbReference>
<dbReference type="Gene3D" id="3.80.10.10">
    <property type="entry name" value="Ribonuclease Inhibitor"/>
    <property type="match status" value="3"/>
</dbReference>
<dbReference type="InterPro" id="IPR001611">
    <property type="entry name" value="Leu-rich_rpt"/>
</dbReference>
<dbReference type="InterPro" id="IPR003591">
    <property type="entry name" value="Leu-rich_rpt_typical-subtyp"/>
</dbReference>
<dbReference type="InterPro" id="IPR032675">
    <property type="entry name" value="LRR_dom_sf"/>
</dbReference>
<dbReference type="InterPro" id="IPR000372">
    <property type="entry name" value="LRRNT"/>
</dbReference>
<dbReference type="InterPro" id="IPR050333">
    <property type="entry name" value="SLRP"/>
</dbReference>
<dbReference type="PANTHER" id="PTHR45712">
    <property type="entry name" value="AGAP008170-PA"/>
    <property type="match status" value="1"/>
</dbReference>
<dbReference type="PANTHER" id="PTHR45712:SF4">
    <property type="entry name" value="FIBROMODULIN"/>
    <property type="match status" value="1"/>
</dbReference>
<dbReference type="Pfam" id="PF00560">
    <property type="entry name" value="LRR_1"/>
    <property type="match status" value="1"/>
</dbReference>
<dbReference type="Pfam" id="PF13516">
    <property type="entry name" value="LRR_6"/>
    <property type="match status" value="2"/>
</dbReference>
<dbReference type="Pfam" id="PF13855">
    <property type="entry name" value="LRR_8"/>
    <property type="match status" value="2"/>
</dbReference>
<dbReference type="Pfam" id="PF01462">
    <property type="entry name" value="LRRNT"/>
    <property type="match status" value="1"/>
</dbReference>
<dbReference type="SMART" id="SM00364">
    <property type="entry name" value="LRR_BAC"/>
    <property type="match status" value="5"/>
</dbReference>
<dbReference type="SMART" id="SM00369">
    <property type="entry name" value="LRR_TYP"/>
    <property type="match status" value="8"/>
</dbReference>
<dbReference type="SMART" id="SM00013">
    <property type="entry name" value="LRRNT"/>
    <property type="match status" value="1"/>
</dbReference>
<dbReference type="SUPFAM" id="SSF52058">
    <property type="entry name" value="L domain-like"/>
    <property type="match status" value="1"/>
</dbReference>
<dbReference type="PROSITE" id="PS51450">
    <property type="entry name" value="LRR"/>
    <property type="match status" value="10"/>
</dbReference>
<sequence length="376" mass="43038">MQWASILLLAGLCSLSWAQYEEDSHWWFQFLRNQQSTYDDPYDPYPYEPYEPYPYGGEEGPAYAYGSPPQPEPRDCPQECDCPPNFPTAMYCDNRNLKYLPFVPSRMKYVYFQNNQISSIQEGVFDNATGLLWIALHGNQITSDKVGKKVFSKLRHLERLYLDHNNLTRIPSPLPRSLRELHLDHNQISRVPNNALEGLENLTALYLHHNEIQEVGSSMKGLRSLILLDLSYNHLRKVPDGLPSALEQLYLEHNNVFSVPDSYFRGSPKLLYVRLSHNSLTNNGLASNTFNSSSLLELDLSYNQLQKIPPVSTNLENLYLQGNRINEFSISSFCTVVDVMNFSKLQVLRLDGNEIKRSAMPADAPLCLRLASLIEI</sequence>
<comment type="function">
    <text evidence="1">Affects the rate of fibrils formation. May have a primary role in collagen fibrillogenesis (By similarity).</text>
</comment>
<comment type="subunit">
    <text>Binds to type I and type II collagen.</text>
</comment>
<comment type="interaction">
    <interactant intactId="EBI-5281124">
        <id>P13605</id>
    </interactant>
    <interactant intactId="EBI-1223708">
        <id>P08603</id>
        <label>CFH</label>
    </interactant>
    <organismsDiffer>true</organismsDiffer>
    <experiments>4</experiments>
</comment>
<comment type="subcellular location">
    <subcellularLocation>
        <location>Secreted</location>
        <location>Extracellular space</location>
        <location>Extracellular matrix</location>
    </subcellularLocation>
</comment>
<comment type="PTM">
    <text evidence="3">Binds keratan sulfate chains.</text>
</comment>
<comment type="similarity">
    <text evidence="5">Belongs to the small leucine-rich proteoglycan (SLRP) family. SLRP class II subfamily.</text>
</comment>
<accession>P13605</accession>
<accession>A7E3X1</accession>
<accession>Q3SWX6</accession>
<reference key="1">
    <citation type="journal article" date="1989" name="EMBO J.">
        <title>A collagen-binding 59-kd protein (fibromodulin) is structurally related to the small interstitial proteoglycans PG-S1 and PG-S2 (decorin).</title>
        <authorList>
            <person name="Oldberg A."/>
            <person name="Antonsson P."/>
            <person name="Lindblom K."/>
            <person name="Heinegaard D."/>
        </authorList>
    </citation>
    <scope>NUCLEOTIDE SEQUENCE [MRNA]</scope>
    <scope>PROTEIN SEQUENCE OF 91-106 AND 275-282</scope>
</reference>
<reference key="2">
    <citation type="journal article" date="2005" name="BMC Genomics">
        <title>Characterization of 954 bovine full-CDS cDNA sequences.</title>
        <authorList>
            <person name="Harhay G.P."/>
            <person name="Sonstegard T.S."/>
            <person name="Keele J.W."/>
            <person name="Heaton M.P."/>
            <person name="Clawson M.L."/>
            <person name="Snelling W.M."/>
            <person name="Wiedmann R.T."/>
            <person name="Van Tassell C.P."/>
            <person name="Smith T.P.L."/>
        </authorList>
    </citation>
    <scope>NUCLEOTIDE SEQUENCE [LARGE SCALE MRNA]</scope>
</reference>
<reference key="3">
    <citation type="submission" date="2005-09" db="EMBL/GenBank/DDBJ databases">
        <authorList>
            <consortium name="NIH - Mammalian Gene Collection (MGC) project"/>
        </authorList>
    </citation>
    <scope>NUCLEOTIDE SEQUENCE [LARGE SCALE MRNA]</scope>
    <source>
        <strain>Hereford</strain>
        <tissue>Ascending colon</tissue>
    </source>
</reference>
<reference key="4">
    <citation type="journal article" date="1990" name="J. Biol. Chem.">
        <title>Identification of the keratan sulfate attachment sites on bovine fibromodulin.</title>
        <authorList>
            <person name="Plaas A.H.K."/>
            <person name="Neame P.J."/>
            <person name="Nivens C.M."/>
            <person name="Reiss L."/>
        </authorList>
    </citation>
    <scope>GLYCOSYLATION AT ASN-127; ASN-166; ASN-201 AND ASN-291</scope>
</reference>
<reference key="5">
    <citation type="journal article" date="1996" name="Eur. J. Biochem.">
        <title>The structure of the keratan sulphate chains attached to fibromodulin isolated from articular cartilage.</title>
        <authorList>
            <person name="Lauder R.M."/>
            <person name="Huckerby T.N."/>
            <person name="Nieduszynski I.A."/>
        </authorList>
    </citation>
    <scope>STRUCTURE OF CARBOHYDRATES</scope>
</reference>
<reference key="6">
    <citation type="journal article" date="2004" name="J. Biol. Chem.">
        <title>Identification of tyrosine sulfation in extracellular leucine-rich repeat proteins using mass spectrometry.</title>
        <authorList>
            <person name="Onnerfjord P."/>
            <person name="Heathfield T.F."/>
            <person name="Heinegaard D."/>
        </authorList>
    </citation>
    <scope>SULFATION AT TYR-20; TYR-38; TYR-45; TYR-47; TYR-50; TYR-53; TYR-55; TYR-63 AND TYR-65</scope>
    <scope>PYROGLUTAMATE FORMATION AT GLN-19</scope>
    <scope>IDENTIFICATION BY MASS SPECTROMETRY</scope>
</reference>
<keyword id="KW-0903">Direct protein sequencing</keyword>
<keyword id="KW-1015">Disulfide bond</keyword>
<keyword id="KW-0272">Extracellular matrix</keyword>
<keyword id="KW-0325">Glycoprotein</keyword>
<keyword id="KW-0433">Leucine-rich repeat</keyword>
<keyword id="KW-0654">Proteoglycan</keyword>
<keyword id="KW-0873">Pyrrolidone carboxylic acid</keyword>
<keyword id="KW-1185">Reference proteome</keyword>
<keyword id="KW-0677">Repeat</keyword>
<keyword id="KW-0964">Secreted</keyword>
<keyword id="KW-0732">Signal</keyword>
<keyword id="KW-0765">Sulfation</keyword>
<feature type="signal peptide" evidence="2">
    <location>
        <begin position="1"/>
        <end position="18"/>
    </location>
</feature>
<feature type="chain" id="PRO_0000032738" description="Fibromodulin">
    <location>
        <begin position="19"/>
        <end position="376"/>
    </location>
</feature>
<feature type="domain" description="LRRNT">
    <location>
        <begin position="67"/>
        <end position="105"/>
    </location>
</feature>
<feature type="repeat" description="LRR 1">
    <location>
        <begin position="106"/>
        <end position="127"/>
    </location>
</feature>
<feature type="repeat" description="LRR 2">
    <location>
        <begin position="130"/>
        <end position="151"/>
    </location>
</feature>
<feature type="repeat" description="LRR 3">
    <location>
        <begin position="156"/>
        <end position="176"/>
    </location>
</feature>
<feature type="repeat" description="LRR 4">
    <location>
        <begin position="177"/>
        <end position="198"/>
    </location>
</feature>
<feature type="repeat" description="LRR 5">
    <location>
        <begin position="201"/>
        <end position="222"/>
    </location>
</feature>
<feature type="repeat" description="LRR 6">
    <location>
        <begin position="224"/>
        <end position="245"/>
    </location>
</feature>
<feature type="repeat" description="LRR 7">
    <location>
        <begin position="246"/>
        <end position="266"/>
    </location>
</feature>
<feature type="repeat" description="LRR 8">
    <location>
        <begin position="269"/>
        <end position="289"/>
    </location>
</feature>
<feature type="repeat" description="LRR 9">
    <location>
        <begin position="294"/>
        <end position="315"/>
    </location>
</feature>
<feature type="repeat" description="LRR 10">
    <location>
        <begin position="316"/>
        <end position="335"/>
    </location>
</feature>
<feature type="repeat" description="LRR 11">
    <location>
        <begin position="344"/>
        <end position="365"/>
    </location>
</feature>
<feature type="modified residue" description="Pyrrolidone carboxylic acid" evidence="3">
    <location>
        <position position="19"/>
    </location>
</feature>
<feature type="modified residue" description="Sulfotyrosine" evidence="3">
    <location>
        <position position="20"/>
    </location>
</feature>
<feature type="modified residue" description="Sulfotyrosine" evidence="3">
    <location>
        <position position="38"/>
    </location>
</feature>
<feature type="modified residue" description="Sulfotyrosine" evidence="6">
    <location>
        <position position="45"/>
    </location>
</feature>
<feature type="modified residue" description="Sulfotyrosine" evidence="6">
    <location>
        <position position="47"/>
    </location>
</feature>
<feature type="modified residue" description="Sulfotyrosine" evidence="6">
    <location>
        <position position="50"/>
    </location>
</feature>
<feature type="modified residue" description="Sulfotyrosine" evidence="3">
    <location>
        <position position="53"/>
    </location>
</feature>
<feature type="modified residue" description="Sulfotyrosine" evidence="3">
    <location>
        <position position="55"/>
    </location>
</feature>
<feature type="modified residue" description="Sulfotyrosine" evidence="3">
    <location>
        <position position="63"/>
    </location>
</feature>
<feature type="modified residue" description="Sulfotyrosine" evidence="3">
    <location>
        <position position="65"/>
    </location>
</feature>
<feature type="glycosylation site" description="N-linked (GlcNAc...) (keratan sulfate) asparagine" evidence="4">
    <location>
        <position position="127"/>
    </location>
</feature>
<feature type="glycosylation site" description="N-linked (GlcNAc...) (keratan sulfate) asparagine" evidence="4">
    <location>
        <position position="166"/>
    </location>
</feature>
<feature type="glycosylation site" description="N-linked (GlcNAc...) (keratan sulfate) asparagine" evidence="4">
    <location>
        <position position="201"/>
    </location>
</feature>
<feature type="glycosylation site" description="N-linked (GlcNAc...) (keratan sulfate) asparagine" evidence="4">
    <location>
        <position position="291"/>
    </location>
</feature>
<feature type="glycosylation site" description="N-linked (GlcNAc...) asparagine" evidence="2">
    <location>
        <position position="341"/>
    </location>
</feature>
<feature type="disulfide bond" evidence="1">
    <location>
        <begin position="334"/>
        <end position="367"/>
    </location>
</feature>
<feature type="sequence conflict" description="In Ref. 1; CAA34503." evidence="5" ref="1">
    <original>YG</original>
    <variation>T</variation>
    <location>
        <begin position="55"/>
        <end position="56"/>
    </location>
</feature>
<feature type="sequence conflict" description="In Ref. 1; CAA34503." evidence="5" ref="1">
    <original>L</original>
    <variation>Q</variation>
    <location>
        <position position="348"/>
    </location>
</feature>